<gene>
    <name evidence="1" type="primary">xpt</name>
    <name type="ordered locus">ABC1443</name>
</gene>
<reference key="1">
    <citation type="submission" date="2003-10" db="EMBL/GenBank/DDBJ databases">
        <title>The complete genome sequence of the alkaliphilic Bacillus clausii KSM-K16.</title>
        <authorList>
            <person name="Takaki Y."/>
            <person name="Kageyama Y."/>
            <person name="Shimamura S."/>
            <person name="Suzuki H."/>
            <person name="Nishi S."/>
            <person name="Hatada Y."/>
            <person name="Kawai S."/>
            <person name="Ito S."/>
            <person name="Horikoshi K."/>
        </authorList>
    </citation>
    <scope>NUCLEOTIDE SEQUENCE [LARGE SCALE GENOMIC DNA]</scope>
    <source>
        <strain>KSM-K16</strain>
    </source>
</reference>
<organism>
    <name type="scientific">Shouchella clausii (strain KSM-K16)</name>
    <name type="common">Alkalihalobacillus clausii</name>
    <dbReference type="NCBI Taxonomy" id="66692"/>
    <lineage>
        <taxon>Bacteria</taxon>
        <taxon>Bacillati</taxon>
        <taxon>Bacillota</taxon>
        <taxon>Bacilli</taxon>
        <taxon>Bacillales</taxon>
        <taxon>Bacillaceae</taxon>
        <taxon>Shouchella</taxon>
    </lineage>
</organism>
<evidence type="ECO:0000255" key="1">
    <source>
        <dbReference type="HAMAP-Rule" id="MF_01184"/>
    </source>
</evidence>
<proteinExistence type="inferred from homology"/>
<name>XPT_SHOC1</name>
<accession>Q5WI27</accession>
<comment type="function">
    <text evidence="1">Converts the preformed base xanthine, a product of nucleic acid breakdown, to xanthosine 5'-monophosphate (XMP), so it can be reused for RNA or DNA synthesis.</text>
</comment>
<comment type="catalytic activity">
    <reaction evidence="1">
        <text>XMP + diphosphate = xanthine + 5-phospho-alpha-D-ribose 1-diphosphate</text>
        <dbReference type="Rhea" id="RHEA:10800"/>
        <dbReference type="ChEBI" id="CHEBI:17712"/>
        <dbReference type="ChEBI" id="CHEBI:33019"/>
        <dbReference type="ChEBI" id="CHEBI:57464"/>
        <dbReference type="ChEBI" id="CHEBI:58017"/>
        <dbReference type="EC" id="2.4.2.22"/>
    </reaction>
</comment>
<comment type="pathway">
    <text evidence="1">Purine metabolism; XMP biosynthesis via salvage pathway; XMP from xanthine: step 1/1.</text>
</comment>
<comment type="subunit">
    <text evidence="1">Homodimer.</text>
</comment>
<comment type="subcellular location">
    <subcellularLocation>
        <location evidence="1">Cytoplasm</location>
    </subcellularLocation>
</comment>
<comment type="similarity">
    <text evidence="1">Belongs to the purine/pyrimidine phosphoribosyltransferase family. Xpt subfamily.</text>
</comment>
<sequence>MELLKEAIRKRGSVLSSGVLKVDQFLNHQVDTNLMSAIGEEFARLFADEHVTKVVTIESSGIAPSFMCAHSLQVPLIFARKKKSVTMDKENVYSSRVYSFTKKEYSEVTVSKDWLCPGDRVLIIDDFLANGQAATGLTQIVEEAGATVAGIGIVIEKSFQDGRALLEGKGYRIESLARISSLEGNKVQFVEESAHFAYNKS</sequence>
<dbReference type="EC" id="2.4.2.22" evidence="1"/>
<dbReference type="EMBL" id="AP006627">
    <property type="protein sequence ID" value="BAD63978.1"/>
    <property type="molecule type" value="Genomic_DNA"/>
</dbReference>
<dbReference type="RefSeq" id="WP_011246287.1">
    <property type="nucleotide sequence ID" value="NC_006582.1"/>
</dbReference>
<dbReference type="SMR" id="Q5WI27"/>
<dbReference type="STRING" id="66692.ABC1443"/>
<dbReference type="KEGG" id="bcl:ABC1443"/>
<dbReference type="eggNOG" id="COG0503">
    <property type="taxonomic scope" value="Bacteria"/>
</dbReference>
<dbReference type="HOGENOM" id="CLU_099015_0_0_9"/>
<dbReference type="OrthoDB" id="9790678at2"/>
<dbReference type="UniPathway" id="UPA00602">
    <property type="reaction ID" value="UER00658"/>
</dbReference>
<dbReference type="Proteomes" id="UP000001168">
    <property type="component" value="Chromosome"/>
</dbReference>
<dbReference type="GO" id="GO:0005737">
    <property type="term" value="C:cytoplasm"/>
    <property type="evidence" value="ECO:0007669"/>
    <property type="project" value="UniProtKB-SubCell"/>
</dbReference>
<dbReference type="GO" id="GO:0000310">
    <property type="term" value="F:xanthine phosphoribosyltransferase activity"/>
    <property type="evidence" value="ECO:0007669"/>
    <property type="project" value="UniProtKB-UniRule"/>
</dbReference>
<dbReference type="GO" id="GO:0006166">
    <property type="term" value="P:purine ribonucleoside salvage"/>
    <property type="evidence" value="ECO:0007669"/>
    <property type="project" value="UniProtKB-KW"/>
</dbReference>
<dbReference type="GO" id="GO:0046110">
    <property type="term" value="P:xanthine metabolic process"/>
    <property type="evidence" value="ECO:0007669"/>
    <property type="project" value="InterPro"/>
</dbReference>
<dbReference type="GO" id="GO:0032265">
    <property type="term" value="P:XMP salvage"/>
    <property type="evidence" value="ECO:0007669"/>
    <property type="project" value="UniProtKB-UniRule"/>
</dbReference>
<dbReference type="CDD" id="cd06223">
    <property type="entry name" value="PRTases_typeI"/>
    <property type="match status" value="1"/>
</dbReference>
<dbReference type="Gene3D" id="3.40.50.2020">
    <property type="match status" value="1"/>
</dbReference>
<dbReference type="HAMAP" id="MF_01184">
    <property type="entry name" value="XPRTase"/>
    <property type="match status" value="1"/>
</dbReference>
<dbReference type="InterPro" id="IPR000836">
    <property type="entry name" value="PRibTrfase_dom"/>
</dbReference>
<dbReference type="InterPro" id="IPR029057">
    <property type="entry name" value="PRTase-like"/>
</dbReference>
<dbReference type="InterPro" id="IPR050118">
    <property type="entry name" value="Pur/Pyrimidine_PRTase"/>
</dbReference>
<dbReference type="InterPro" id="IPR010079">
    <property type="entry name" value="Xanthine_PRibTrfase"/>
</dbReference>
<dbReference type="NCBIfam" id="NF006671">
    <property type="entry name" value="PRK09219.1"/>
    <property type="match status" value="1"/>
</dbReference>
<dbReference type="NCBIfam" id="TIGR01744">
    <property type="entry name" value="XPRTase"/>
    <property type="match status" value="1"/>
</dbReference>
<dbReference type="PANTHER" id="PTHR43864">
    <property type="entry name" value="HYPOXANTHINE/GUANINE PHOSPHORIBOSYLTRANSFERASE"/>
    <property type="match status" value="1"/>
</dbReference>
<dbReference type="PANTHER" id="PTHR43864:SF1">
    <property type="entry name" value="XANTHINE PHOSPHORIBOSYLTRANSFERASE"/>
    <property type="match status" value="1"/>
</dbReference>
<dbReference type="Pfam" id="PF00156">
    <property type="entry name" value="Pribosyltran"/>
    <property type="match status" value="1"/>
</dbReference>
<dbReference type="SUPFAM" id="SSF53271">
    <property type="entry name" value="PRTase-like"/>
    <property type="match status" value="1"/>
</dbReference>
<protein>
    <recommendedName>
        <fullName evidence="1">Xanthine phosphoribosyltransferase</fullName>
        <shortName evidence="1">XPRTase</shortName>
        <ecNumber evidence="1">2.4.2.22</ecNumber>
    </recommendedName>
</protein>
<feature type="chain" id="PRO_0000339664" description="Xanthine phosphoribosyltransferase">
    <location>
        <begin position="1"/>
        <end position="201"/>
    </location>
</feature>
<feature type="binding site" evidence="1">
    <location>
        <position position="20"/>
    </location>
    <ligand>
        <name>xanthine</name>
        <dbReference type="ChEBI" id="CHEBI:17712"/>
    </ligand>
</feature>
<feature type="binding site" evidence="1">
    <location>
        <position position="27"/>
    </location>
    <ligand>
        <name>xanthine</name>
        <dbReference type="ChEBI" id="CHEBI:17712"/>
    </ligand>
</feature>
<feature type="binding site" evidence="1">
    <location>
        <begin position="129"/>
        <end position="133"/>
    </location>
    <ligand>
        <name>5-phospho-alpha-D-ribose 1-diphosphate</name>
        <dbReference type="ChEBI" id="CHEBI:58017"/>
    </ligand>
</feature>
<feature type="binding site" evidence="1">
    <location>
        <position position="157"/>
    </location>
    <ligand>
        <name>xanthine</name>
        <dbReference type="ChEBI" id="CHEBI:17712"/>
    </ligand>
</feature>
<keyword id="KW-0963">Cytoplasm</keyword>
<keyword id="KW-0328">Glycosyltransferase</keyword>
<keyword id="KW-0660">Purine salvage</keyword>
<keyword id="KW-1185">Reference proteome</keyword>
<keyword id="KW-0808">Transferase</keyword>